<protein>
    <recommendedName>
        <fullName evidence="1">Phosphoribosylformylglycinamidine cyclo-ligase</fullName>
        <ecNumber evidence="1">6.3.3.1</ecNumber>
    </recommendedName>
    <alternativeName>
        <fullName evidence="1">AIR synthase</fullName>
    </alternativeName>
    <alternativeName>
        <fullName evidence="1">AIRS</fullName>
    </alternativeName>
    <alternativeName>
        <fullName evidence="1">Phosphoribosyl-aminoimidazole synthetase</fullName>
    </alternativeName>
</protein>
<feature type="chain" id="PRO_1000193033" description="Phosphoribosylformylglycinamidine cyclo-ligase">
    <location>
        <begin position="1"/>
        <end position="345"/>
    </location>
</feature>
<keyword id="KW-0067">ATP-binding</keyword>
<keyword id="KW-0963">Cytoplasm</keyword>
<keyword id="KW-0436">Ligase</keyword>
<keyword id="KW-0547">Nucleotide-binding</keyword>
<keyword id="KW-0658">Purine biosynthesis</keyword>
<keyword id="KW-1185">Reference proteome</keyword>
<accession>A9BCS9</accession>
<comment type="catalytic activity">
    <reaction evidence="1">
        <text>2-formamido-N(1)-(5-O-phospho-beta-D-ribosyl)acetamidine + ATP = 5-amino-1-(5-phospho-beta-D-ribosyl)imidazole + ADP + phosphate + H(+)</text>
        <dbReference type="Rhea" id="RHEA:23032"/>
        <dbReference type="ChEBI" id="CHEBI:15378"/>
        <dbReference type="ChEBI" id="CHEBI:30616"/>
        <dbReference type="ChEBI" id="CHEBI:43474"/>
        <dbReference type="ChEBI" id="CHEBI:137981"/>
        <dbReference type="ChEBI" id="CHEBI:147287"/>
        <dbReference type="ChEBI" id="CHEBI:456216"/>
        <dbReference type="EC" id="6.3.3.1"/>
    </reaction>
</comment>
<comment type="pathway">
    <text evidence="1">Purine metabolism; IMP biosynthesis via de novo pathway; 5-amino-1-(5-phospho-D-ribosyl)imidazole from N(2)-formyl-N(1)-(5-phospho-D-ribosyl)glycinamide: step 2/2.</text>
</comment>
<comment type="subcellular location">
    <subcellularLocation>
        <location evidence="1">Cytoplasm</location>
    </subcellularLocation>
</comment>
<comment type="similarity">
    <text evidence="1">Belongs to the AIR synthase family.</text>
</comment>
<dbReference type="EC" id="6.3.3.1" evidence="1"/>
<dbReference type="EMBL" id="CP000878">
    <property type="protein sequence ID" value="ABX09641.1"/>
    <property type="molecule type" value="Genomic_DNA"/>
</dbReference>
<dbReference type="RefSeq" id="WP_012196261.1">
    <property type="nucleotide sequence ID" value="NC_009976.1"/>
</dbReference>
<dbReference type="SMR" id="A9BCS9"/>
<dbReference type="STRING" id="93059.P9211_17101"/>
<dbReference type="KEGG" id="pmj:P9211_17101"/>
<dbReference type="eggNOG" id="COG0150">
    <property type="taxonomic scope" value="Bacteria"/>
</dbReference>
<dbReference type="HOGENOM" id="CLU_047116_0_0_3"/>
<dbReference type="OrthoDB" id="9802507at2"/>
<dbReference type="UniPathway" id="UPA00074">
    <property type="reaction ID" value="UER00129"/>
</dbReference>
<dbReference type="Proteomes" id="UP000000788">
    <property type="component" value="Chromosome"/>
</dbReference>
<dbReference type="GO" id="GO:0005829">
    <property type="term" value="C:cytosol"/>
    <property type="evidence" value="ECO:0007669"/>
    <property type="project" value="TreeGrafter"/>
</dbReference>
<dbReference type="GO" id="GO:0005524">
    <property type="term" value="F:ATP binding"/>
    <property type="evidence" value="ECO:0007669"/>
    <property type="project" value="UniProtKB-KW"/>
</dbReference>
<dbReference type="GO" id="GO:0004637">
    <property type="term" value="F:phosphoribosylamine-glycine ligase activity"/>
    <property type="evidence" value="ECO:0007669"/>
    <property type="project" value="TreeGrafter"/>
</dbReference>
<dbReference type="GO" id="GO:0004641">
    <property type="term" value="F:phosphoribosylformylglycinamidine cyclo-ligase activity"/>
    <property type="evidence" value="ECO:0007669"/>
    <property type="project" value="UniProtKB-UniRule"/>
</dbReference>
<dbReference type="GO" id="GO:0006189">
    <property type="term" value="P:'de novo' IMP biosynthetic process"/>
    <property type="evidence" value="ECO:0007669"/>
    <property type="project" value="UniProtKB-UniRule"/>
</dbReference>
<dbReference type="GO" id="GO:0046084">
    <property type="term" value="P:adenine biosynthetic process"/>
    <property type="evidence" value="ECO:0007669"/>
    <property type="project" value="TreeGrafter"/>
</dbReference>
<dbReference type="CDD" id="cd02196">
    <property type="entry name" value="PurM"/>
    <property type="match status" value="1"/>
</dbReference>
<dbReference type="FunFam" id="3.30.1330.10:FF:000001">
    <property type="entry name" value="Phosphoribosylformylglycinamidine cyclo-ligase"/>
    <property type="match status" value="1"/>
</dbReference>
<dbReference type="FunFam" id="3.90.650.10:FF:000011">
    <property type="entry name" value="Phosphoribosylformylglycinamidine cyclo-ligase"/>
    <property type="match status" value="1"/>
</dbReference>
<dbReference type="Gene3D" id="3.90.650.10">
    <property type="entry name" value="PurM-like C-terminal domain"/>
    <property type="match status" value="1"/>
</dbReference>
<dbReference type="Gene3D" id="3.30.1330.10">
    <property type="entry name" value="PurM-like, N-terminal domain"/>
    <property type="match status" value="1"/>
</dbReference>
<dbReference type="HAMAP" id="MF_00741">
    <property type="entry name" value="AIRS"/>
    <property type="match status" value="1"/>
</dbReference>
<dbReference type="InterPro" id="IPR010918">
    <property type="entry name" value="PurM-like_C_dom"/>
</dbReference>
<dbReference type="InterPro" id="IPR036676">
    <property type="entry name" value="PurM-like_C_sf"/>
</dbReference>
<dbReference type="InterPro" id="IPR016188">
    <property type="entry name" value="PurM-like_N"/>
</dbReference>
<dbReference type="InterPro" id="IPR036921">
    <property type="entry name" value="PurM-like_N_sf"/>
</dbReference>
<dbReference type="InterPro" id="IPR004733">
    <property type="entry name" value="PurM_cligase"/>
</dbReference>
<dbReference type="NCBIfam" id="TIGR00878">
    <property type="entry name" value="purM"/>
    <property type="match status" value="1"/>
</dbReference>
<dbReference type="PANTHER" id="PTHR10520:SF12">
    <property type="entry name" value="TRIFUNCTIONAL PURINE BIOSYNTHETIC PROTEIN ADENOSINE-3"/>
    <property type="match status" value="1"/>
</dbReference>
<dbReference type="PANTHER" id="PTHR10520">
    <property type="entry name" value="TRIFUNCTIONAL PURINE BIOSYNTHETIC PROTEIN ADENOSINE-3-RELATED"/>
    <property type="match status" value="1"/>
</dbReference>
<dbReference type="Pfam" id="PF00586">
    <property type="entry name" value="AIRS"/>
    <property type="match status" value="1"/>
</dbReference>
<dbReference type="Pfam" id="PF02769">
    <property type="entry name" value="AIRS_C"/>
    <property type="match status" value="1"/>
</dbReference>
<dbReference type="SUPFAM" id="SSF56042">
    <property type="entry name" value="PurM C-terminal domain-like"/>
    <property type="match status" value="1"/>
</dbReference>
<dbReference type="SUPFAM" id="SSF55326">
    <property type="entry name" value="PurM N-terminal domain-like"/>
    <property type="match status" value="1"/>
</dbReference>
<organism>
    <name type="scientific">Prochlorococcus marinus (strain MIT 9211)</name>
    <dbReference type="NCBI Taxonomy" id="93059"/>
    <lineage>
        <taxon>Bacteria</taxon>
        <taxon>Bacillati</taxon>
        <taxon>Cyanobacteriota</taxon>
        <taxon>Cyanophyceae</taxon>
        <taxon>Synechococcales</taxon>
        <taxon>Prochlorococcaceae</taxon>
        <taxon>Prochlorococcus</taxon>
    </lineage>
</organism>
<gene>
    <name evidence="1" type="primary">purM</name>
    <name type="ordered locus">P9211_17101</name>
</gene>
<sequence>MDYKTAGVDVKAGRAFVDLIKTSVNETSRPEVIGGIGGFGGFMRLPHGLENPVLVAGTDGVGTKLELAQDYHAHFGVGIDLVAMCVNDVITSGAEPLLFLDYIATGKLAPKDLSEVVKGIAEGCKKSNCVLLGGETAEMPGFYSKGRYDLAGFCLAVVEEKKIIDGSTIKAGDQIIGVQSNGLHSNGFSLVRKVLGMSGANKSILVDTKKTPLIDSLLQPTALYVELVQSLLKHTIPIKGMAHITGGGLPENLPRCLPNGLNAFIEPGSWDIPEIFFWLKKAGHIPEDDWWNTFNLGIGFCLVVSTDQVEAALEICTEIGWDAWTIGRVQEPTVPGQQRLIGLPE</sequence>
<reference key="1">
    <citation type="journal article" date="2007" name="PLoS Genet.">
        <title>Patterns and implications of gene gain and loss in the evolution of Prochlorococcus.</title>
        <authorList>
            <person name="Kettler G.C."/>
            <person name="Martiny A.C."/>
            <person name="Huang K."/>
            <person name="Zucker J."/>
            <person name="Coleman M.L."/>
            <person name="Rodrigue S."/>
            <person name="Chen F."/>
            <person name="Lapidus A."/>
            <person name="Ferriera S."/>
            <person name="Johnson J."/>
            <person name="Steglich C."/>
            <person name="Church G.M."/>
            <person name="Richardson P."/>
            <person name="Chisholm S.W."/>
        </authorList>
    </citation>
    <scope>NUCLEOTIDE SEQUENCE [LARGE SCALE GENOMIC DNA]</scope>
    <source>
        <strain>MIT 9211</strain>
    </source>
</reference>
<evidence type="ECO:0000255" key="1">
    <source>
        <dbReference type="HAMAP-Rule" id="MF_00741"/>
    </source>
</evidence>
<name>PUR5_PROM4</name>
<proteinExistence type="inferred from homology"/>